<keyword id="KW-0028">Amino-acid biosynthesis</keyword>
<keyword id="KW-0963">Cytoplasm</keyword>
<keyword id="KW-0903">Direct protein sequencing</keyword>
<keyword id="KW-0521">NADP</keyword>
<keyword id="KW-0560">Oxidoreductase</keyword>
<keyword id="KW-0641">Proline biosynthesis</keyword>
<keyword id="KW-1185">Reference proteome</keyword>
<evidence type="ECO:0000255" key="1">
    <source>
        <dbReference type="HAMAP-Rule" id="MF_00412"/>
    </source>
</evidence>
<evidence type="ECO:0000269" key="2">
    <source>
    </source>
</evidence>
<evidence type="ECO:0000269" key="3">
    <source>
    </source>
</evidence>
<evidence type="ECO:0000269" key="4">
    <source>
    </source>
</evidence>
<evidence type="ECO:0000305" key="5"/>
<reference key="1">
    <citation type="journal article" date="1984" name="Nucleic Acids Res.">
        <title>Analysis of the Escherichia coli proBA locus by DNA and protein sequencing.</title>
        <authorList>
            <person name="Deutch A.H."/>
            <person name="Rushlow K.E."/>
            <person name="Smith C.J."/>
        </authorList>
    </citation>
    <scope>NUCLEOTIDE SEQUENCE [GENOMIC DNA]</scope>
    <scope>PARTIAL PROTEIN SEQUENCE</scope>
</reference>
<reference key="2">
    <citation type="submission" date="1996-02" db="EMBL/GenBank/DDBJ databases">
        <title>Systematic sequencing of the Escherichia coli genome: analysis of the 4.0 - 6.0 min (189,987 - 281,416bp) region.</title>
        <authorList>
            <person name="Takemoto K."/>
            <person name="Mori H."/>
            <person name="Murayama N."/>
            <person name="Kataoka K."/>
            <person name="Yano M."/>
            <person name="Itoh T."/>
            <person name="Yamamoto Y."/>
            <person name="Inokuchi H."/>
            <person name="Miki T."/>
            <person name="Hatada E."/>
            <person name="Fukuda R."/>
            <person name="Ichihara S."/>
            <person name="Mizuno T."/>
            <person name="Makino K."/>
            <person name="Nakata A."/>
            <person name="Yura T."/>
            <person name="Sampei G."/>
            <person name="Mizobuchi K."/>
        </authorList>
    </citation>
    <scope>NUCLEOTIDE SEQUENCE [LARGE SCALE GENOMIC DNA]</scope>
    <source>
        <strain>K12 / W3110 / ATCC 27325 / DSM 5911</strain>
    </source>
</reference>
<reference key="3">
    <citation type="submission" date="1997-01" db="EMBL/GenBank/DDBJ databases">
        <title>Sequence of minutes 4-25 of Escherichia coli.</title>
        <authorList>
            <person name="Chung E."/>
            <person name="Allen E."/>
            <person name="Araujo R."/>
            <person name="Aparicio A.M."/>
            <person name="Davis K."/>
            <person name="Duncan M."/>
            <person name="Federspiel N."/>
            <person name="Hyman R."/>
            <person name="Kalman S."/>
            <person name="Komp C."/>
            <person name="Kurdi O."/>
            <person name="Lew H."/>
            <person name="Lin D."/>
            <person name="Namath A."/>
            <person name="Oefner P."/>
            <person name="Roberts D."/>
            <person name="Schramm S."/>
            <person name="Davis R.W."/>
        </authorList>
    </citation>
    <scope>NUCLEOTIDE SEQUENCE [LARGE SCALE GENOMIC DNA]</scope>
    <source>
        <strain>K12 / MG1655 / ATCC 47076</strain>
    </source>
</reference>
<reference key="4">
    <citation type="journal article" date="1997" name="Science">
        <title>The complete genome sequence of Escherichia coli K-12.</title>
        <authorList>
            <person name="Blattner F.R."/>
            <person name="Plunkett G. III"/>
            <person name="Bloch C.A."/>
            <person name="Perna N.T."/>
            <person name="Burland V."/>
            <person name="Riley M."/>
            <person name="Collado-Vides J."/>
            <person name="Glasner J.D."/>
            <person name="Rode C.K."/>
            <person name="Mayhew G.F."/>
            <person name="Gregor J."/>
            <person name="Davis N.W."/>
            <person name="Kirkpatrick H.A."/>
            <person name="Goeden M.A."/>
            <person name="Rose D.J."/>
            <person name="Mau B."/>
            <person name="Shao Y."/>
        </authorList>
    </citation>
    <scope>NUCLEOTIDE SEQUENCE [LARGE SCALE GENOMIC DNA]</scope>
    <source>
        <strain>K12 / MG1655 / ATCC 47076</strain>
    </source>
</reference>
<reference key="5">
    <citation type="journal article" date="2006" name="Mol. Syst. Biol.">
        <title>Highly accurate genome sequences of Escherichia coli K-12 strains MG1655 and W3110.</title>
        <authorList>
            <person name="Hayashi K."/>
            <person name="Morooka N."/>
            <person name="Yamamoto Y."/>
            <person name="Fujita K."/>
            <person name="Isono K."/>
            <person name="Choi S."/>
            <person name="Ohtsubo E."/>
            <person name="Baba T."/>
            <person name="Wanner B.L."/>
            <person name="Mori H."/>
            <person name="Horiuchi T."/>
        </authorList>
    </citation>
    <scope>NUCLEOTIDE SEQUENCE [LARGE SCALE GENOMIC DNA]</scope>
    <scope>SEQUENCE REVISION TO 358-367</scope>
    <source>
        <strain>K12 / W3110 / ATCC 27325 / DSM 5911</strain>
    </source>
</reference>
<reference key="6">
    <citation type="journal article" date="1992" name="Mol. Microbiol.">
        <title>Structure and biosynthesis of unbranched multicopy single-stranded DNA by reverse transcriptase in a clinical Escherichia coli isolate.</title>
        <authorList>
            <person name="Lim D."/>
        </authorList>
    </citation>
    <scope>NUCLEOTIDE SEQUENCE [GENOMIC DNA] OF 368-417</scope>
    <source>
        <strain>Clinical strain</strain>
    </source>
</reference>
<reference key="7">
    <citation type="journal article" date="1981" name="Biochem. J.">
        <title>Proline biosynthesis in Escherichia coli. Stoichiometry and end-product identification of the reaction catalysed by glutamate semialdehyde dehydrogenase.</title>
        <authorList>
            <person name="Hayzer D.J."/>
            <person name="Leisinger T."/>
        </authorList>
    </citation>
    <scope>FUNCTION</scope>
    <scope>CATALYTIC ACTIVITY</scope>
</reference>
<reference key="8">
    <citation type="journal article" date="1982" name="Eur. J. Biochem.">
        <title>Proline biosynthesis in Escherichia coli. Purification and characterisation of glutamate-semialdehyde dehydrogenase.</title>
        <authorList>
            <person name="Hayzer D.J."/>
            <person name="Leisinger T."/>
        </authorList>
    </citation>
    <scope>FUNCTION</scope>
    <scope>CATALYTIC ACTIVITY</scope>
    <scope>ACTIVITY REGULATION</scope>
    <scope>BIOPHYSICOCHEMICAL PROPERTIES</scope>
    <scope>PATHWAY</scope>
    <scope>SUBUNIT</scope>
</reference>
<reference key="9">
    <citation type="journal article" date="1984" name="J. Bacteriol.">
        <title>Purification and characteristics of a gamma-glutamyl kinase involved in Escherichia coli proline biosynthesis.</title>
        <authorList>
            <person name="Smith C.J."/>
            <person name="Deutch A.H."/>
            <person name="Rushlow K.E."/>
        </authorList>
    </citation>
    <scope>SUBUNIT</scope>
</reference>
<comment type="function">
    <text evidence="1 3 4">Catalyzes the NADPH-dependent reduction of L-glutamate 5-phosphate into L-glutamate 5-semialdehyde and phosphate. The product spontaneously undergoes cyclization to form 1-pyrroline-5-carboxylate.</text>
</comment>
<comment type="catalytic activity">
    <reaction evidence="1 3 4">
        <text>L-glutamate 5-semialdehyde + phosphate + NADP(+) = L-glutamyl 5-phosphate + NADPH + H(+)</text>
        <dbReference type="Rhea" id="RHEA:19541"/>
        <dbReference type="ChEBI" id="CHEBI:15378"/>
        <dbReference type="ChEBI" id="CHEBI:43474"/>
        <dbReference type="ChEBI" id="CHEBI:57783"/>
        <dbReference type="ChEBI" id="CHEBI:58066"/>
        <dbReference type="ChEBI" id="CHEBI:58274"/>
        <dbReference type="ChEBI" id="CHEBI:58349"/>
        <dbReference type="EC" id="1.2.1.41"/>
    </reaction>
</comment>
<comment type="activity regulation">
    <text evidence="4">Inhibited by p-chloromercuribenzoate, copper and nickel ions.</text>
</comment>
<comment type="biophysicochemical properties">
    <phDependence>
        <text evidence="4">Optimum pH is 7.0.</text>
    </phDependence>
</comment>
<comment type="pathway">
    <text evidence="1 4">Amino-acid biosynthesis; L-proline biosynthesis; L-glutamate 5-semialdehyde from L-glutamate: step 2/2.</text>
</comment>
<comment type="subunit">
    <text evidence="2 4 5">Homodimer (Probable). May form a complex with glutamate 5-kinase (proB).</text>
</comment>
<comment type="interaction">
    <interactant intactId="EBI-548584">
        <id>P07004</id>
    </interactant>
    <interactant intactId="EBI-556431">
        <id>P0AFT5</id>
        <label>btsR</label>
    </interactant>
    <organismsDiffer>false</organismsDiffer>
    <experiments>4</experiments>
</comment>
<comment type="interaction">
    <interactant intactId="EBI-548584">
        <id>P07004</id>
    </interactant>
    <interactant intactId="EBI-556404">
        <id>P16676</id>
        <label>cysA</label>
    </interactant>
    <organismsDiffer>false</organismsDiffer>
    <experiments>3</experiments>
</comment>
<comment type="interaction">
    <interactant intactId="EBI-548584">
        <id>P07004</id>
    </interactant>
    <interactant intactId="EBI-556413">
        <id>P0A823</id>
        <label>sfsA</label>
    </interactant>
    <organismsDiffer>false</organismsDiffer>
    <experiments>4</experiments>
</comment>
<comment type="subcellular location">
    <subcellularLocation>
        <location evidence="1">Cytoplasm</location>
    </subcellularLocation>
</comment>
<comment type="similarity">
    <text evidence="1">Belongs to the gamma-glutamyl phosphate reductase family.</text>
</comment>
<name>PROA_ECOLI</name>
<accession>P07004</accession>
<accession>P77428</accession>
<gene>
    <name evidence="1" type="primary">proA</name>
    <name type="ordered locus">b0243</name>
    <name type="ordered locus">JW0233</name>
</gene>
<sequence>MLEQMGIAAKQASYKLAQLSSREKNRVLEKIADELEAQSEIILNANAQDVADARANGLSEAMLDRLALTPARLKGIADDVRQVCNLADPVGQVIDGGVLDSGLRLERRRVPLGVIGVIYEARPNVTVDVASLCLKTGNAVILRGGKETCRTNAATVAVIQDALKSCGLPAGAVQAIDNPDRALVSEMLRMDKYIDMLIPRGGAGLHKLCREQSTIPVITGGIGVCHIYVDESVEIAEALKVIVNAKTQRPSTCNTVETLLVNKNIADSFLPALSKQMAESGVTLHADAAALAQLQAGPAKVVAVKAEEYDDEFLSLDLNVKIVSDLDDAIAHIREHGTQHSDAILTRDMRNAQRFVNEVDSSAVYVNASTRFTDGGQFGLGAEVAVSTQKLHARGPMGLEALTTYKWIGIGDYTIRA</sequence>
<feature type="chain" id="PRO_0000189723" description="Gamma-glutamyl phosphate reductase">
    <location>
        <begin position="1"/>
        <end position="417"/>
    </location>
</feature>
<feature type="sequence conflict" description="In Ref. 1 and 2." evidence="5" ref="1 2">
    <location>
        <begin position="358"/>
        <end position="367"/>
    </location>
</feature>
<organism>
    <name type="scientific">Escherichia coli (strain K12)</name>
    <dbReference type="NCBI Taxonomy" id="83333"/>
    <lineage>
        <taxon>Bacteria</taxon>
        <taxon>Pseudomonadati</taxon>
        <taxon>Pseudomonadota</taxon>
        <taxon>Gammaproteobacteria</taxon>
        <taxon>Enterobacterales</taxon>
        <taxon>Enterobacteriaceae</taxon>
        <taxon>Escherichia</taxon>
    </lineage>
</organism>
<protein>
    <recommendedName>
        <fullName evidence="1">Gamma-glutamyl phosphate reductase</fullName>
        <shortName evidence="1">GPR</shortName>
        <ecNumber evidence="1">1.2.1.41</ecNumber>
    </recommendedName>
    <alternativeName>
        <fullName evidence="1">Glutamate-5-semialdehyde dehydrogenase</fullName>
    </alternativeName>
    <alternativeName>
        <fullName evidence="1">Glutamyl-gamma-semialdehyde dehydrogenase</fullName>
        <shortName evidence="1">GSA dehydrogenase</shortName>
    </alternativeName>
</protein>
<proteinExistence type="evidence at protein level"/>
<dbReference type="EC" id="1.2.1.41" evidence="1"/>
<dbReference type="EMBL" id="X00786">
    <property type="protein sequence ID" value="CAA25364.1"/>
    <property type="molecule type" value="Genomic_DNA"/>
</dbReference>
<dbReference type="EMBL" id="U70214">
    <property type="protein sequence ID" value="AAB08663.1"/>
    <property type="molecule type" value="Genomic_DNA"/>
</dbReference>
<dbReference type="EMBL" id="U00096">
    <property type="protein sequence ID" value="AAC73347.1"/>
    <property type="molecule type" value="Genomic_DNA"/>
</dbReference>
<dbReference type="EMBL" id="AP009048">
    <property type="protein sequence ID" value="BAA77912.2"/>
    <property type="molecule type" value="Genomic_DNA"/>
</dbReference>
<dbReference type="EMBL" id="Z12832">
    <property type="protein sequence ID" value="CAA78292.1"/>
    <property type="molecule type" value="Genomic_DNA"/>
</dbReference>
<dbReference type="PIR" id="D64749">
    <property type="entry name" value="RDECER"/>
</dbReference>
<dbReference type="RefSeq" id="NP_414778.1">
    <property type="nucleotide sequence ID" value="NC_000913.3"/>
</dbReference>
<dbReference type="RefSeq" id="WP_000893278.1">
    <property type="nucleotide sequence ID" value="NZ_SSZK01000050.1"/>
</dbReference>
<dbReference type="SMR" id="P07004"/>
<dbReference type="BioGRID" id="4259768">
    <property type="interactions" value="54"/>
</dbReference>
<dbReference type="BioGRID" id="851022">
    <property type="interactions" value="5"/>
</dbReference>
<dbReference type="DIP" id="DIP-10568N"/>
<dbReference type="FunCoup" id="P07004">
    <property type="interactions" value="672"/>
</dbReference>
<dbReference type="IntAct" id="P07004">
    <property type="interactions" value="17"/>
</dbReference>
<dbReference type="STRING" id="511145.b0243"/>
<dbReference type="jPOST" id="P07004"/>
<dbReference type="PaxDb" id="511145-b0243"/>
<dbReference type="EnsemblBacteria" id="AAC73347">
    <property type="protein sequence ID" value="AAC73347"/>
    <property type="gene ID" value="b0243"/>
</dbReference>
<dbReference type="GeneID" id="93777150"/>
<dbReference type="GeneID" id="946680"/>
<dbReference type="KEGG" id="ecj:JW0233"/>
<dbReference type="KEGG" id="eco:b0243"/>
<dbReference type="KEGG" id="ecoc:C3026_01155"/>
<dbReference type="KEGG" id="ecoc:C3026_23890"/>
<dbReference type="PATRIC" id="fig|1411691.4.peg.2040"/>
<dbReference type="EchoBASE" id="EB0760"/>
<dbReference type="eggNOG" id="COG0014">
    <property type="taxonomic scope" value="Bacteria"/>
</dbReference>
<dbReference type="HOGENOM" id="CLU_030231_0_0_6"/>
<dbReference type="InParanoid" id="P07004"/>
<dbReference type="OMA" id="KTQRYGT"/>
<dbReference type="OrthoDB" id="9809970at2"/>
<dbReference type="PhylomeDB" id="P07004"/>
<dbReference type="BioCyc" id="EcoCyc:GLUTSEMIALDEHYDROG-MONOMER"/>
<dbReference type="BioCyc" id="MetaCyc:GLUTSEMIALDEHYDROG-MONOMER"/>
<dbReference type="UniPathway" id="UPA00098">
    <property type="reaction ID" value="UER00360"/>
</dbReference>
<dbReference type="PRO" id="PR:P07004"/>
<dbReference type="Proteomes" id="UP000000625">
    <property type="component" value="Chromosome"/>
</dbReference>
<dbReference type="GO" id="GO:0005829">
    <property type="term" value="C:cytosol"/>
    <property type="evidence" value="ECO:0000314"/>
    <property type="project" value="EcoCyc"/>
</dbReference>
<dbReference type="GO" id="GO:0004350">
    <property type="term" value="F:glutamate-5-semialdehyde dehydrogenase activity"/>
    <property type="evidence" value="ECO:0000314"/>
    <property type="project" value="EcoCyc"/>
</dbReference>
<dbReference type="GO" id="GO:0042802">
    <property type="term" value="F:identical protein binding"/>
    <property type="evidence" value="ECO:0000314"/>
    <property type="project" value="EcoCyc"/>
</dbReference>
<dbReference type="GO" id="GO:0050661">
    <property type="term" value="F:NADP binding"/>
    <property type="evidence" value="ECO:0007669"/>
    <property type="project" value="InterPro"/>
</dbReference>
<dbReference type="GO" id="GO:0055129">
    <property type="term" value="P:L-proline biosynthetic process"/>
    <property type="evidence" value="ECO:0000315"/>
    <property type="project" value="EcoCyc"/>
</dbReference>
<dbReference type="GO" id="GO:0006561">
    <property type="term" value="P:proline biosynthetic process"/>
    <property type="evidence" value="ECO:0000269"/>
    <property type="project" value="EcoCyc"/>
</dbReference>
<dbReference type="CDD" id="cd07079">
    <property type="entry name" value="ALDH_F18-19_ProA-GPR"/>
    <property type="match status" value="1"/>
</dbReference>
<dbReference type="FunFam" id="3.40.309.10:FF:000006">
    <property type="entry name" value="Gamma-glutamyl phosphate reductase"/>
    <property type="match status" value="1"/>
</dbReference>
<dbReference type="Gene3D" id="3.40.605.10">
    <property type="entry name" value="Aldehyde Dehydrogenase, Chain A, domain 1"/>
    <property type="match status" value="1"/>
</dbReference>
<dbReference type="Gene3D" id="3.40.309.10">
    <property type="entry name" value="Aldehyde Dehydrogenase, Chain A, domain 2"/>
    <property type="match status" value="1"/>
</dbReference>
<dbReference type="HAMAP" id="MF_00412">
    <property type="entry name" value="ProA"/>
    <property type="match status" value="1"/>
</dbReference>
<dbReference type="InterPro" id="IPR016161">
    <property type="entry name" value="Ald_DH/histidinol_DH"/>
</dbReference>
<dbReference type="InterPro" id="IPR016163">
    <property type="entry name" value="Ald_DH_C"/>
</dbReference>
<dbReference type="InterPro" id="IPR016162">
    <property type="entry name" value="Ald_DH_N"/>
</dbReference>
<dbReference type="InterPro" id="IPR015590">
    <property type="entry name" value="Aldehyde_DH_dom"/>
</dbReference>
<dbReference type="InterPro" id="IPR020593">
    <property type="entry name" value="G-glutamylP_reductase_CS"/>
</dbReference>
<dbReference type="InterPro" id="IPR012134">
    <property type="entry name" value="Glu-5-SA_DH"/>
</dbReference>
<dbReference type="InterPro" id="IPR000965">
    <property type="entry name" value="GPR_dom"/>
</dbReference>
<dbReference type="NCBIfam" id="NF001221">
    <property type="entry name" value="PRK00197.1"/>
    <property type="match status" value="1"/>
</dbReference>
<dbReference type="NCBIfam" id="TIGR00407">
    <property type="entry name" value="proA"/>
    <property type="match status" value="1"/>
</dbReference>
<dbReference type="PANTHER" id="PTHR11063:SF8">
    <property type="entry name" value="DELTA-1-PYRROLINE-5-CARBOXYLATE SYNTHASE"/>
    <property type="match status" value="1"/>
</dbReference>
<dbReference type="PANTHER" id="PTHR11063">
    <property type="entry name" value="GLUTAMATE SEMIALDEHYDE DEHYDROGENASE"/>
    <property type="match status" value="1"/>
</dbReference>
<dbReference type="Pfam" id="PF00171">
    <property type="entry name" value="Aldedh"/>
    <property type="match status" value="1"/>
</dbReference>
<dbReference type="PIRSF" id="PIRSF000151">
    <property type="entry name" value="GPR"/>
    <property type="match status" value="1"/>
</dbReference>
<dbReference type="SUPFAM" id="SSF53720">
    <property type="entry name" value="ALDH-like"/>
    <property type="match status" value="1"/>
</dbReference>
<dbReference type="PROSITE" id="PS01223">
    <property type="entry name" value="PROA"/>
    <property type="match status" value="1"/>
</dbReference>